<organism>
    <name type="scientific">Escherichia coli (strain K12)</name>
    <dbReference type="NCBI Taxonomy" id="83333"/>
    <lineage>
        <taxon>Bacteria</taxon>
        <taxon>Pseudomonadati</taxon>
        <taxon>Pseudomonadota</taxon>
        <taxon>Gammaproteobacteria</taxon>
        <taxon>Enterobacterales</taxon>
        <taxon>Enterobacteriaceae</taxon>
        <taxon>Escherichia</taxon>
    </lineage>
</organism>
<proteinExistence type="evidence at protein level"/>
<accession>A5A618</accession>
<dbReference type="EMBL" id="U00096">
    <property type="protein sequence ID" value="ABP93447.1"/>
    <property type="molecule type" value="Genomic_DNA"/>
</dbReference>
<dbReference type="EMBL" id="AP009048">
    <property type="status" value="NOT_ANNOTATED_CDS"/>
    <property type="molecule type" value="Genomic_DNA"/>
</dbReference>
<dbReference type="RefSeq" id="WP_000102278.1">
    <property type="nucleotide sequence ID" value="NZ_STEB01000003.1"/>
</dbReference>
<dbReference type="RefSeq" id="YP_001165321.1">
    <property type="nucleotide sequence ID" value="NC_000913.3"/>
</dbReference>
<dbReference type="PDB" id="6RKO">
    <property type="method" value="EM"/>
    <property type="resolution" value="2.68 A"/>
    <property type="chains" value="H=1-29"/>
</dbReference>
<dbReference type="PDBsum" id="6RKO"/>
<dbReference type="EMDB" id="EMD-4908"/>
<dbReference type="SMR" id="A5A618"/>
<dbReference type="STRING" id="511145.b4602"/>
<dbReference type="TCDB" id="3.D.4.3.2">
    <property type="family name" value="the proton-translocating cytochrome oxidase (cox) superfamily"/>
</dbReference>
<dbReference type="jPOST" id="A5A618"/>
<dbReference type="PaxDb" id="511145-b4602"/>
<dbReference type="EnsemblBacteria" id="ABP93447">
    <property type="protein sequence ID" value="ABP93447"/>
    <property type="gene ID" value="b4602"/>
</dbReference>
<dbReference type="GeneID" id="5061505"/>
<dbReference type="GeneID" id="93775812"/>
<dbReference type="KEGG" id="eco:b4602"/>
<dbReference type="KEGG" id="ecoc:C3026_09510"/>
<dbReference type="PATRIC" id="fig|511145.12.peg.1730"/>
<dbReference type="InParanoid" id="A5A618"/>
<dbReference type="BioCyc" id="EcoCyc:MONOMER0-2822"/>
<dbReference type="BioCyc" id="MetaCyc:MONOMER0-2822"/>
<dbReference type="PRO" id="PR:A5A618"/>
<dbReference type="Proteomes" id="UP000000625">
    <property type="component" value="Chromosome"/>
</dbReference>
<dbReference type="GO" id="GO:0070069">
    <property type="term" value="C:cytochrome complex"/>
    <property type="evidence" value="ECO:0000314"/>
    <property type="project" value="EcoCyc"/>
</dbReference>
<dbReference type="GO" id="GO:0016020">
    <property type="term" value="C:membrane"/>
    <property type="evidence" value="ECO:0000314"/>
    <property type="project" value="EcoCyc"/>
</dbReference>
<dbReference type="GO" id="GO:0005886">
    <property type="term" value="C:plasma membrane"/>
    <property type="evidence" value="ECO:0007669"/>
    <property type="project" value="UniProtKB-SubCell"/>
</dbReference>
<dbReference type="GO" id="GO:0071456">
    <property type="term" value="P:cellular response to hypoxia"/>
    <property type="evidence" value="ECO:0000270"/>
    <property type="project" value="EcoCyc"/>
</dbReference>
<dbReference type="InterPro" id="IPR047743">
    <property type="entry name" value="YnhF-like"/>
</dbReference>
<dbReference type="NCBIfam" id="NF033411">
    <property type="entry name" value="small_mem_YnhF"/>
    <property type="match status" value="1"/>
</dbReference>
<reference key="1">
    <citation type="journal article" date="1997" name="Science">
        <title>The complete genome sequence of Escherichia coli K-12.</title>
        <authorList>
            <person name="Blattner F.R."/>
            <person name="Plunkett G. III"/>
            <person name="Bloch C.A."/>
            <person name="Perna N.T."/>
            <person name="Burland V."/>
            <person name="Riley M."/>
            <person name="Collado-Vides J."/>
            <person name="Glasner J.D."/>
            <person name="Rode C.K."/>
            <person name="Mayhew G.F."/>
            <person name="Gregor J."/>
            <person name="Davis N.W."/>
            <person name="Kirkpatrick H.A."/>
            <person name="Goeden M.A."/>
            <person name="Rose D.J."/>
            <person name="Mau B."/>
            <person name="Shao Y."/>
        </authorList>
    </citation>
    <scope>NUCLEOTIDE SEQUENCE [LARGE SCALE GENOMIC DNA]</scope>
    <source>
        <strain>K12 / MG1655 / ATCC 47076</strain>
    </source>
</reference>
<reference key="2">
    <citation type="journal article" date="2006" name="Mol. Syst. Biol.">
        <title>Highly accurate genome sequences of Escherichia coli K-12 strains MG1655 and W3110.</title>
        <authorList>
            <person name="Hayashi K."/>
            <person name="Morooka N."/>
            <person name="Yamamoto Y."/>
            <person name="Fujita K."/>
            <person name="Isono K."/>
            <person name="Choi S."/>
            <person name="Ohtsubo E."/>
            <person name="Baba T."/>
            <person name="Wanner B.L."/>
            <person name="Mori H."/>
            <person name="Horiuchi T."/>
        </authorList>
    </citation>
    <scope>NUCLEOTIDE SEQUENCE [LARGE SCALE GENOMIC DNA]</scope>
    <source>
        <strain>K12 / W3110 / ATCC 27325 / DSM 5911</strain>
    </source>
</reference>
<reference key="3">
    <citation type="journal article" date="2008" name="Mol. Microbiol.">
        <title>Small membrane proteins found by comparative genomics and ribosome binding site models.</title>
        <authorList>
            <person name="Hemm M.R."/>
            <person name="Paul B.J."/>
            <person name="Schneider T.D."/>
            <person name="Storz G."/>
            <person name="Rudd K.E."/>
        </authorList>
    </citation>
    <scope>SUBCELLULAR LOCATION</scope>
    <scope>INDUCTION</scope>
    <source>
        <strain>K12 / MG1655 / ATCC 47076</strain>
    </source>
</reference>
<reference key="4">
    <citation type="journal article" date="2010" name="J. Bacteriol.">
        <title>Small stress response proteins in Escherichia coli: proteins missed by classical proteomic studies.</title>
        <authorList>
            <person name="Hemm M.R."/>
            <person name="Paul B.J."/>
            <person name="Miranda-Rios J."/>
            <person name="Zhang A."/>
            <person name="Soltanzad N."/>
            <person name="Storz G."/>
        </authorList>
    </citation>
    <scope>INDUCTION</scope>
    <source>
        <strain>K12 / MG1655 / ATCC 47076</strain>
    </source>
</reference>
<reference key="5">
    <citation type="journal article" date="2011" name="Anal. Biochem.">
        <title>Identification of a chloroform-soluble membrane miniprotein in Escherichia coli and its homolog in Salmonella typhimurium.</title>
        <authorList>
            <person name="Guan Z."/>
            <person name="Wang X."/>
            <person name="Raetz C.R."/>
        </authorList>
    </citation>
    <scope>IDENTIFICATION</scope>
    <scope>MASS SPECTROMETRY</scope>
    <scope>FORMYLATION AT MET-1</scope>
    <source>
        <strain>K12 / W3110 / ATCC 27325 / DSM 5911</strain>
    </source>
</reference>
<reference key="6">
    <citation type="journal article" date="2011" name="J. Biol. Chem.">
        <title>Membrane localization of small proteins in Escherichia coli.</title>
        <authorList>
            <person name="Fontaine F."/>
            <person name="Fuchs R.T."/>
            <person name="Storz G."/>
        </authorList>
    </citation>
    <scope>SUBCELLULAR LOCATION</scope>
    <scope>TOPOLOGY</scope>
    <source>
        <strain>K12 / MG1655 / ATCC 47076</strain>
    </source>
</reference>
<name>YNHF_ECOLI</name>
<comment type="subcellular location">
    <subcellularLocation>
        <location evidence="6 7">Cell inner membrane</location>
        <topology evidence="2 5">Single-pass membrane protein</topology>
    </subcellularLocation>
    <text>May be able to insert into the membrane in both orientations.</text>
</comment>
<comment type="induction">
    <text evidence="2 3">Constitutively expressed (PubMed:19121005), repressed on shift from glucose minimal to glycerol minimal medium, induced in low oxygen (PubMed:19121005) (at protein level).</text>
</comment>
<comment type="mass spectrometry" mass="3023.74" method="Electrospray" evidence="4">
    <text>Includes N-formyl-Met.</text>
</comment>
<sequence length="29" mass="2998">MSTDLKFSLVTTIIVLGLIVAVGLTAALH</sequence>
<protein>
    <recommendedName>
        <fullName>Uncharacterized protein YnhF</fullName>
    </recommendedName>
</protein>
<evidence type="ECO:0000255" key="1"/>
<evidence type="ECO:0000269" key="2">
    <source>
    </source>
</evidence>
<evidence type="ECO:0000269" key="3">
    <source>
    </source>
</evidence>
<evidence type="ECO:0000269" key="4">
    <source>
    </source>
</evidence>
<evidence type="ECO:0000269" key="5">
    <source>
    </source>
</evidence>
<evidence type="ECO:0000305" key="6">
    <source>
    </source>
</evidence>
<evidence type="ECO:0000305" key="7">
    <source>
    </source>
</evidence>
<evidence type="ECO:0007829" key="8">
    <source>
        <dbReference type="PDB" id="6RKO"/>
    </source>
</evidence>
<keyword id="KW-0002">3D-structure</keyword>
<keyword id="KW-0997">Cell inner membrane</keyword>
<keyword id="KW-1003">Cell membrane</keyword>
<keyword id="KW-0291">Formylation</keyword>
<keyword id="KW-0472">Membrane</keyword>
<keyword id="KW-1185">Reference proteome</keyword>
<keyword id="KW-0346">Stress response</keyword>
<keyword id="KW-0812">Transmembrane</keyword>
<keyword id="KW-1133">Transmembrane helix</keyword>
<feature type="chain" id="PRO_0000311789" description="Uncharacterized protein YnhF">
    <location>
        <begin position="1"/>
        <end position="29"/>
    </location>
</feature>
<feature type="transmembrane region" description="Helical" evidence="1">
    <location>
        <begin position="7"/>
        <end position="27"/>
    </location>
</feature>
<feature type="modified residue" description="N-formylmethionine" evidence="4">
    <location>
        <position position="1"/>
    </location>
</feature>
<feature type="helix" evidence="8">
    <location>
        <begin position="4"/>
        <end position="27"/>
    </location>
</feature>
<gene>
    <name type="primary">ynhF</name>
    <name type="ordered locus">b4602</name>
    <name type="ordered locus">JW1649.1</name>
</gene>